<keyword id="KW-0903">Direct protein sequencing</keyword>
<keyword id="KW-0677">Repeat</keyword>
<keyword id="KW-0964">Secreted</keyword>
<name>NDBX_TITST</name>
<reference key="1">
    <citation type="journal article" date="2007" name="Comp. Biochem. Physiol.">
        <title>Proteomic analysis of the venom from the scorpion Tityus stigmurus: biochemical and physiological comparison with other Tityus species.</title>
        <authorList>
            <person name="Batista C.V.F."/>
            <person name="Roman-Gonzalez S.A."/>
            <person name="Salas-Castillo S.P."/>
            <person name="Zamudio F.Z."/>
            <person name="Gomez-Lagunas F."/>
            <person name="Possani L.D."/>
        </authorList>
    </citation>
    <scope>PROTEIN SEQUENCE</scope>
    <scope>SUBCELLULAR LOCATION</scope>
    <scope>MASS SPECTROMETRY</scope>
    <source>
        <tissue>Venom</tissue>
    </source>
</reference>
<protein>
    <recommendedName>
        <fullName>Pape peptide</fullName>
    </recommendedName>
</protein>
<accession>P0C8W6</accession>
<comment type="subcellular location">
    <subcellularLocation>
        <location evidence="1">Secreted</location>
    </subcellularLocation>
</comment>
<comment type="tissue specificity">
    <text evidence="4">Expressed by the venom gland.</text>
</comment>
<comment type="mass spectrometry"/>
<comment type="similarity">
    <text evidence="4">Belongs to the non-disulfide-bridged peptide (NDBP) superfamily.</text>
</comment>
<organism>
    <name type="scientific">Tityus stigmurus</name>
    <name type="common">Brazilian scorpion</name>
    <dbReference type="NCBI Taxonomy" id="50344"/>
    <lineage>
        <taxon>Eukaryota</taxon>
        <taxon>Metazoa</taxon>
        <taxon>Ecdysozoa</taxon>
        <taxon>Arthropoda</taxon>
        <taxon>Chelicerata</taxon>
        <taxon>Arachnida</taxon>
        <taxon>Scorpiones</taxon>
        <taxon>Buthida</taxon>
        <taxon>Buthoidea</taxon>
        <taxon>Buthidae</taxon>
        <taxon>Tityus</taxon>
    </lineage>
</organism>
<proteinExistence type="evidence at protein level"/>
<dbReference type="GO" id="GO:0005576">
    <property type="term" value="C:extracellular region"/>
    <property type="evidence" value="ECO:0007669"/>
    <property type="project" value="UniProtKB-SubCell"/>
</dbReference>
<feature type="chain" id="PRO_0000366104" description="Pape peptide">
    <location>
        <begin position="1"/>
        <end position="46"/>
    </location>
</feature>
<feature type="repeat" description="PAPE 1">
    <location>
        <begin position="16"/>
        <end position="19"/>
    </location>
</feature>
<feature type="repeat" description="PAPE 2">
    <location>
        <begin position="20"/>
        <end position="23"/>
    </location>
</feature>
<feature type="repeat" description="PAPE 3">
    <location>
        <begin position="24"/>
        <end position="27"/>
    </location>
</feature>
<feature type="repeat" description="PAPE 4">
    <location>
        <begin position="28"/>
        <end position="31"/>
    </location>
</feature>
<feature type="region of interest" description="Disordered" evidence="2">
    <location>
        <begin position="1"/>
        <end position="46"/>
    </location>
</feature>
<feature type="compositionally biased region" description="Low complexity" evidence="2">
    <location>
        <begin position="1"/>
        <end position="10"/>
    </location>
</feature>
<feature type="compositionally biased region" description="Pro residues" evidence="2">
    <location>
        <begin position="11"/>
        <end position="33"/>
    </location>
</feature>
<feature type="compositionally biased region" description="Low complexity" evidence="2">
    <location>
        <begin position="34"/>
        <end position="46"/>
    </location>
</feature>
<evidence type="ECO:0000250" key="1"/>
<evidence type="ECO:0000256" key="2">
    <source>
        <dbReference type="SAM" id="MobiDB-lite"/>
    </source>
</evidence>
<evidence type="ECO:0000269" key="3">
    <source>
    </source>
</evidence>
<evidence type="ECO:0000305" key="4"/>
<sequence>KQLLKEALAPEPAPKPAPEPAPEPAPEPAPEAAPEPAAAAPEAAPE</sequence>